<reference key="1">
    <citation type="submission" date="2007-03" db="EMBL/GenBank/DDBJ databases">
        <title>Complete sequence of Prosthecochloris vibrioformis DSM 265.</title>
        <authorList>
            <consortium name="US DOE Joint Genome Institute"/>
            <person name="Copeland A."/>
            <person name="Lucas S."/>
            <person name="Lapidus A."/>
            <person name="Barry K."/>
            <person name="Detter J.C."/>
            <person name="Glavina del Rio T."/>
            <person name="Hammon N."/>
            <person name="Israni S."/>
            <person name="Pitluck S."/>
            <person name="Schmutz J."/>
            <person name="Larimer F."/>
            <person name="Land M."/>
            <person name="Hauser L."/>
            <person name="Mikhailova N."/>
            <person name="Li T."/>
            <person name="Overmann J."/>
            <person name="Schuster S.C."/>
            <person name="Bryant D.A."/>
            <person name="Richardson P."/>
        </authorList>
    </citation>
    <scope>NUCLEOTIDE SEQUENCE [LARGE SCALE GENOMIC DNA]</scope>
    <source>
        <strain>DSM 265 / 1930</strain>
    </source>
</reference>
<sequence>MKQDIHPKYTEVTVNCANCGNTFVTRSTRDSIKVDICSNCHPFYTGKQTLVDTAGRVDRFNKRFAKSAASQAQAK</sequence>
<feature type="chain" id="PRO_1000126695" description="Large ribosomal subunit protein bL31">
    <location>
        <begin position="1"/>
        <end position="75"/>
    </location>
</feature>
<organism>
    <name type="scientific">Chlorobium phaeovibrioides (strain DSM 265 / 1930)</name>
    <name type="common">Prosthecochloris vibrioformis (strain DSM 265)</name>
    <dbReference type="NCBI Taxonomy" id="290318"/>
    <lineage>
        <taxon>Bacteria</taxon>
        <taxon>Pseudomonadati</taxon>
        <taxon>Chlorobiota</taxon>
        <taxon>Chlorobiia</taxon>
        <taxon>Chlorobiales</taxon>
        <taxon>Chlorobiaceae</taxon>
        <taxon>Chlorobium/Pelodictyon group</taxon>
        <taxon>Chlorobium</taxon>
    </lineage>
</organism>
<gene>
    <name evidence="1" type="primary">rpmE</name>
    <name type="ordered locus">Cvib_0409</name>
</gene>
<evidence type="ECO:0000255" key="1">
    <source>
        <dbReference type="HAMAP-Rule" id="MF_00501"/>
    </source>
</evidence>
<evidence type="ECO:0000305" key="2"/>
<name>RL31_CHLPM</name>
<keyword id="KW-0687">Ribonucleoprotein</keyword>
<keyword id="KW-0689">Ribosomal protein</keyword>
<keyword id="KW-0694">RNA-binding</keyword>
<keyword id="KW-0699">rRNA-binding</keyword>
<comment type="function">
    <text evidence="1">Binds the 23S rRNA.</text>
</comment>
<comment type="subunit">
    <text evidence="1">Part of the 50S ribosomal subunit.</text>
</comment>
<comment type="similarity">
    <text evidence="1">Belongs to the bacterial ribosomal protein bL31 family. Type A subfamily.</text>
</comment>
<accession>A4SD72</accession>
<proteinExistence type="inferred from homology"/>
<dbReference type="EMBL" id="CP000607">
    <property type="protein sequence ID" value="ABP36431.1"/>
    <property type="molecule type" value="Genomic_DNA"/>
</dbReference>
<dbReference type="SMR" id="A4SD72"/>
<dbReference type="STRING" id="290318.Cvib_0409"/>
<dbReference type="KEGG" id="pvi:Cvib_0409"/>
<dbReference type="eggNOG" id="COG0254">
    <property type="taxonomic scope" value="Bacteria"/>
</dbReference>
<dbReference type="HOGENOM" id="CLU_114306_4_3_10"/>
<dbReference type="OrthoDB" id="9803251at2"/>
<dbReference type="GO" id="GO:1990904">
    <property type="term" value="C:ribonucleoprotein complex"/>
    <property type="evidence" value="ECO:0007669"/>
    <property type="project" value="UniProtKB-KW"/>
</dbReference>
<dbReference type="GO" id="GO:0005840">
    <property type="term" value="C:ribosome"/>
    <property type="evidence" value="ECO:0007669"/>
    <property type="project" value="UniProtKB-KW"/>
</dbReference>
<dbReference type="GO" id="GO:0019843">
    <property type="term" value="F:rRNA binding"/>
    <property type="evidence" value="ECO:0007669"/>
    <property type="project" value="UniProtKB-KW"/>
</dbReference>
<dbReference type="GO" id="GO:0003735">
    <property type="term" value="F:structural constituent of ribosome"/>
    <property type="evidence" value="ECO:0007669"/>
    <property type="project" value="InterPro"/>
</dbReference>
<dbReference type="GO" id="GO:0006412">
    <property type="term" value="P:translation"/>
    <property type="evidence" value="ECO:0007669"/>
    <property type="project" value="UniProtKB-UniRule"/>
</dbReference>
<dbReference type="Gene3D" id="4.10.830.30">
    <property type="entry name" value="Ribosomal protein L31"/>
    <property type="match status" value="1"/>
</dbReference>
<dbReference type="HAMAP" id="MF_00501">
    <property type="entry name" value="Ribosomal_bL31_1"/>
    <property type="match status" value="1"/>
</dbReference>
<dbReference type="InterPro" id="IPR034704">
    <property type="entry name" value="Ribosomal_bL28/bL31-like_sf"/>
</dbReference>
<dbReference type="InterPro" id="IPR002150">
    <property type="entry name" value="Ribosomal_bL31"/>
</dbReference>
<dbReference type="InterPro" id="IPR027491">
    <property type="entry name" value="Ribosomal_bL31_A"/>
</dbReference>
<dbReference type="InterPro" id="IPR042105">
    <property type="entry name" value="Ribosomal_bL31_sf"/>
</dbReference>
<dbReference type="NCBIfam" id="TIGR00105">
    <property type="entry name" value="L31"/>
    <property type="match status" value="1"/>
</dbReference>
<dbReference type="NCBIfam" id="NF000612">
    <property type="entry name" value="PRK00019.1"/>
    <property type="match status" value="1"/>
</dbReference>
<dbReference type="NCBIfam" id="NF001809">
    <property type="entry name" value="PRK00528.1"/>
    <property type="match status" value="1"/>
</dbReference>
<dbReference type="PANTHER" id="PTHR33280">
    <property type="entry name" value="50S RIBOSOMAL PROTEIN L31, CHLOROPLASTIC"/>
    <property type="match status" value="1"/>
</dbReference>
<dbReference type="PANTHER" id="PTHR33280:SF1">
    <property type="entry name" value="LARGE RIBOSOMAL SUBUNIT PROTEIN BL31C"/>
    <property type="match status" value="1"/>
</dbReference>
<dbReference type="Pfam" id="PF01197">
    <property type="entry name" value="Ribosomal_L31"/>
    <property type="match status" value="1"/>
</dbReference>
<dbReference type="PRINTS" id="PR01249">
    <property type="entry name" value="RIBOSOMALL31"/>
</dbReference>
<dbReference type="SUPFAM" id="SSF143800">
    <property type="entry name" value="L28p-like"/>
    <property type="match status" value="1"/>
</dbReference>
<dbReference type="PROSITE" id="PS01143">
    <property type="entry name" value="RIBOSOMAL_L31"/>
    <property type="match status" value="1"/>
</dbReference>
<protein>
    <recommendedName>
        <fullName evidence="1">Large ribosomal subunit protein bL31</fullName>
    </recommendedName>
    <alternativeName>
        <fullName evidence="2">50S ribosomal protein L31</fullName>
    </alternativeName>
</protein>